<dbReference type="EMBL" id="AJ400848">
    <property type="protein sequence ID" value="CAB88714.1"/>
    <property type="molecule type" value="Genomic_DNA"/>
</dbReference>
<dbReference type="PIR" id="S00581">
    <property type="entry name" value="R3SP2"/>
</dbReference>
<dbReference type="RefSeq" id="NP_054921.1">
    <property type="nucleotide sequence ID" value="NC_002202.1"/>
</dbReference>
<dbReference type="PDB" id="4V61">
    <property type="method" value="EM"/>
    <property type="resolution" value="9.40 A"/>
    <property type="chains" value="AB=5-235"/>
</dbReference>
<dbReference type="PDB" id="5MMJ">
    <property type="method" value="EM"/>
    <property type="resolution" value="3.65 A"/>
    <property type="chains" value="b=1-236"/>
</dbReference>
<dbReference type="PDB" id="5MMM">
    <property type="method" value="EM"/>
    <property type="resolution" value="3.40 A"/>
    <property type="chains" value="b=1-236"/>
</dbReference>
<dbReference type="PDB" id="5X8P">
    <property type="method" value="EM"/>
    <property type="resolution" value="3.40 A"/>
    <property type="chains" value="b=1-236"/>
</dbReference>
<dbReference type="PDB" id="5X8R">
    <property type="method" value="EM"/>
    <property type="resolution" value="3.70 A"/>
    <property type="chains" value="b=1-236"/>
</dbReference>
<dbReference type="PDB" id="6ERI">
    <property type="method" value="EM"/>
    <property type="resolution" value="3.00 A"/>
    <property type="chains" value="BB=22-236"/>
</dbReference>
<dbReference type="PDBsum" id="4V61"/>
<dbReference type="PDBsum" id="5MMJ"/>
<dbReference type="PDBsum" id="5MMM"/>
<dbReference type="PDBsum" id="5X8P"/>
<dbReference type="PDBsum" id="5X8R"/>
<dbReference type="PDBsum" id="6ERI"/>
<dbReference type="EMDB" id="EMD-3532"/>
<dbReference type="EMDB" id="EMD-3533"/>
<dbReference type="EMDB" id="EMD-3941"/>
<dbReference type="EMDB" id="EMD-6709"/>
<dbReference type="EMDB" id="EMD-6710"/>
<dbReference type="SMR" id="P08242"/>
<dbReference type="FunCoup" id="P08242">
    <property type="interactions" value="492"/>
</dbReference>
<dbReference type="STRING" id="3562.P08242"/>
<dbReference type="GeneID" id="2715644"/>
<dbReference type="KEGG" id="soe:2715644"/>
<dbReference type="InParanoid" id="P08242"/>
<dbReference type="OrthoDB" id="565471at2759"/>
<dbReference type="Proteomes" id="UP001155700">
    <property type="component" value="Chloroplast Pltd"/>
</dbReference>
<dbReference type="GO" id="GO:0009507">
    <property type="term" value="C:chloroplast"/>
    <property type="evidence" value="ECO:0007669"/>
    <property type="project" value="UniProtKB-SubCell"/>
</dbReference>
<dbReference type="GO" id="GO:0005763">
    <property type="term" value="C:mitochondrial small ribosomal subunit"/>
    <property type="evidence" value="ECO:0000318"/>
    <property type="project" value="GO_Central"/>
</dbReference>
<dbReference type="GO" id="GO:0003735">
    <property type="term" value="F:structural constituent of ribosome"/>
    <property type="evidence" value="ECO:0000318"/>
    <property type="project" value="GO_Central"/>
</dbReference>
<dbReference type="GO" id="GO:0006412">
    <property type="term" value="P:translation"/>
    <property type="evidence" value="ECO:0007669"/>
    <property type="project" value="UniProtKB-UniRule"/>
</dbReference>
<dbReference type="CDD" id="cd01425">
    <property type="entry name" value="RPS2"/>
    <property type="match status" value="1"/>
</dbReference>
<dbReference type="FunFam" id="3.40.50.10490:FF:000101">
    <property type="match status" value="1"/>
</dbReference>
<dbReference type="FunFam" id="1.10.287.610:FF:000001">
    <property type="entry name" value="30S ribosomal protein S2"/>
    <property type="match status" value="1"/>
</dbReference>
<dbReference type="Gene3D" id="3.40.50.10490">
    <property type="entry name" value="Glucose-6-phosphate isomerase like protein, domain 1"/>
    <property type="match status" value="1"/>
</dbReference>
<dbReference type="Gene3D" id="1.10.287.610">
    <property type="entry name" value="Helix hairpin bin"/>
    <property type="match status" value="1"/>
</dbReference>
<dbReference type="HAMAP" id="MF_00291_B">
    <property type="entry name" value="Ribosomal_uS2_B"/>
    <property type="match status" value="1"/>
</dbReference>
<dbReference type="InterPro" id="IPR001865">
    <property type="entry name" value="Ribosomal_uS2"/>
</dbReference>
<dbReference type="InterPro" id="IPR005706">
    <property type="entry name" value="Ribosomal_uS2_bac/mit/plastid"/>
</dbReference>
<dbReference type="InterPro" id="IPR018130">
    <property type="entry name" value="Ribosomal_uS2_CS"/>
</dbReference>
<dbReference type="InterPro" id="IPR023591">
    <property type="entry name" value="Ribosomal_uS2_flav_dom_sf"/>
</dbReference>
<dbReference type="NCBIfam" id="TIGR01011">
    <property type="entry name" value="rpsB_bact"/>
    <property type="match status" value="1"/>
</dbReference>
<dbReference type="PANTHER" id="PTHR12534">
    <property type="entry name" value="30S RIBOSOMAL PROTEIN S2 PROKARYOTIC AND ORGANELLAR"/>
    <property type="match status" value="1"/>
</dbReference>
<dbReference type="PANTHER" id="PTHR12534:SF0">
    <property type="entry name" value="SMALL RIBOSOMAL SUBUNIT PROTEIN US2M"/>
    <property type="match status" value="1"/>
</dbReference>
<dbReference type="Pfam" id="PF00318">
    <property type="entry name" value="Ribosomal_S2"/>
    <property type="match status" value="1"/>
</dbReference>
<dbReference type="PRINTS" id="PR00395">
    <property type="entry name" value="RIBOSOMALS2"/>
</dbReference>
<dbReference type="SUPFAM" id="SSF52313">
    <property type="entry name" value="Ribosomal protein S2"/>
    <property type="match status" value="1"/>
</dbReference>
<dbReference type="PROSITE" id="PS00962">
    <property type="entry name" value="RIBOSOMAL_S2_1"/>
    <property type="match status" value="1"/>
</dbReference>
<dbReference type="PROSITE" id="PS00963">
    <property type="entry name" value="RIBOSOMAL_S2_2"/>
    <property type="match status" value="1"/>
</dbReference>
<reference key="1">
    <citation type="journal article" date="1987" name="J. Mol. Biol.">
        <title>A gene cluster in the spinach and pea chloroplast genomes encoding one CF1 and three CF0 subunits of the H+-ATP synthase complex and the ribosomal protein S2.</title>
        <authorList>
            <person name="Hudson G.S."/>
            <person name="Mason J.G."/>
            <person name="Holton T.A."/>
            <person name="Koller B."/>
            <person name="Cox G.B."/>
            <person name="Whitfeld P.R."/>
            <person name="Bottomley W."/>
        </authorList>
    </citation>
    <scope>NUCLEOTIDE SEQUENCE [GENOMIC DNA]</scope>
</reference>
<reference key="2">
    <citation type="journal article" date="2001" name="Plant Mol. Biol.">
        <title>The plastid chromosome of spinach (Spinacia oleracea): complete nucleotide sequence and gene organization.</title>
        <authorList>
            <person name="Schmitz-Linneweber C."/>
            <person name="Maier R.M."/>
            <person name="Alcaraz J.-P."/>
            <person name="Cottet A."/>
            <person name="Herrmann R.G."/>
            <person name="Mache R."/>
        </authorList>
    </citation>
    <scope>NUCLEOTIDE SEQUENCE [LARGE SCALE GENOMIC DNA]</scope>
    <source>
        <strain>cv. Geant d'hiver</strain>
        <strain>cv. Monatol</strain>
    </source>
</reference>
<reference key="3">
    <citation type="journal article" date="1988" name="J. Mol. Biol.">
        <title>Spinach chloroplast rpoBC genes encode three subunits of the chloroplast RNA polymerase.</title>
        <authorList>
            <person name="Hudson G.S."/>
            <person name="Holton T.A."/>
            <person name="Whitfeld P.R."/>
            <person name="Bottomley W."/>
        </authorList>
    </citation>
    <scope>NUCLEOTIDE SEQUENCE [GENOMIC DNA] OF 1-22</scope>
</reference>
<reference key="4">
    <citation type="journal article" date="2000" name="J. Biol. Chem.">
        <title>The plastid ribosomal proteins. Identification of all the proteins in the 30S subunit of an organelle ribosome (chloroplast).</title>
        <authorList>
            <person name="Yamaguchi K."/>
            <person name="von Knoblauch K."/>
            <person name="Subramanian A.R."/>
        </authorList>
    </citation>
    <scope>PROTEIN SEQUENCE OF 2-11</scope>
    <scope>SUBUNIT</scope>
    <scope>SUBCELLULAR LOCATION</scope>
    <scope>MASS SPECTROMETRY</scope>
    <source>
        <strain>cv. Alwaro</strain>
        <tissue>Leaf</tissue>
    </source>
</reference>
<reference key="5">
    <citation type="journal article" date="2007" name="Proc. Natl. Acad. Sci. U.S.A.">
        <title>Cryo-EM study of the spinach chloroplast ribosome reveals the structural and functional roles of plastid-specific ribosomal proteins.</title>
        <authorList>
            <person name="Sharma M.R."/>
            <person name="Wilson D.N."/>
            <person name="Datta P.P."/>
            <person name="Barat C."/>
            <person name="Schluenzen F."/>
            <person name="Fucini P."/>
            <person name="Agrawal R.K."/>
        </authorList>
    </citation>
    <scope>STRUCTURE BY ELECTRON MICROSCOPY (9.4 ANGSTROMS)</scope>
</reference>
<reference key="6">
    <citation type="journal article" date="2017" name="EMBO J.">
        <title>The complete structure of the chloroplast 70S ribosome in complex with translation factor pY.</title>
        <authorList>
            <person name="Bieri P."/>
            <person name="Leibundgut M."/>
            <person name="Saurer M."/>
            <person name="Boehringer D."/>
            <person name="Ban N."/>
        </authorList>
    </citation>
    <scope>STRUCTURE BY ELECTRON MICROSCOPY (3.40 ANGSTROMS)</scope>
    <scope>SUBUNIT</scope>
    <scope>SUBCELLULAR LOCATION</scope>
</reference>
<protein>
    <recommendedName>
        <fullName evidence="4">Small ribosomal subunit protein uS2c</fullName>
    </recommendedName>
    <alternativeName>
        <fullName evidence="3">30S ribosomal protein S2, chloroplastic</fullName>
    </alternativeName>
</protein>
<accession>P08242</accession>
<geneLocation type="chloroplast"/>
<feature type="initiator methionine" description="Removed" evidence="1">
    <location>
        <position position="1"/>
    </location>
</feature>
<feature type="chain" id="PRO_0000134313" description="Small ribosomal subunit protein uS2c">
    <location>
        <begin position="2"/>
        <end position="236"/>
    </location>
</feature>
<organism>
    <name type="scientific">Spinacia oleracea</name>
    <name type="common">Spinach</name>
    <dbReference type="NCBI Taxonomy" id="3562"/>
    <lineage>
        <taxon>Eukaryota</taxon>
        <taxon>Viridiplantae</taxon>
        <taxon>Streptophyta</taxon>
        <taxon>Embryophyta</taxon>
        <taxon>Tracheophyta</taxon>
        <taxon>Spermatophyta</taxon>
        <taxon>Magnoliopsida</taxon>
        <taxon>eudicotyledons</taxon>
        <taxon>Gunneridae</taxon>
        <taxon>Pentapetalae</taxon>
        <taxon>Caryophyllales</taxon>
        <taxon>Chenopodiaceae</taxon>
        <taxon>Chenopodioideae</taxon>
        <taxon>Anserineae</taxon>
        <taxon>Spinacia</taxon>
    </lineage>
</organism>
<evidence type="ECO:0000269" key="1">
    <source>
    </source>
</evidence>
<evidence type="ECO:0000269" key="2">
    <source>
    </source>
</evidence>
<evidence type="ECO:0000303" key="3">
    <source>
    </source>
</evidence>
<evidence type="ECO:0000303" key="4">
    <source>
    </source>
</evidence>
<evidence type="ECO:0000305" key="5"/>
<evidence type="ECO:0000305" key="6">
    <source>
    </source>
</evidence>
<evidence type="ECO:0000305" key="7">
    <source>
    </source>
</evidence>
<name>RR2_SPIOL</name>
<proteinExistence type="evidence at protein level"/>
<keyword id="KW-0002">3D-structure</keyword>
<keyword id="KW-0150">Chloroplast</keyword>
<keyword id="KW-0903">Direct protein sequencing</keyword>
<keyword id="KW-0934">Plastid</keyword>
<keyword id="KW-1185">Reference proteome</keyword>
<keyword id="KW-0687">Ribonucleoprotein</keyword>
<keyword id="KW-0689">Ribosomal protein</keyword>
<gene>
    <name type="primary">rps2</name>
</gene>
<sequence>MTRRYWNINLEEMMEAGVHFGHGTRKWNPRMSPYISAKCKGIHIINLTRTARFLSEACDLVFDASSRGKQFLIVGTKNKAADSVARAAIRARCHYVNKKWLGGMLTNWSTTETRLHKFRDLRMEQTAGRLARLPKRDAAVVKRQLSHLQTYLGGIKYMTGLPDIVIIVDQQEEYTALRECITLGIPTICLIDTNCNPDLADISIPANDDAIASIRLILTKLVFAICEGRSSYIRNP</sequence>
<comment type="function">
    <text evidence="6 7">Component of the chloroplast ribosome (chloro-ribosome), a dedicated translation machinery responsible for the synthesis of chloroplast genome-encoded proteins, including proteins of the transcription and translation machinery and components of the photosynthetic apparatus.</text>
</comment>
<comment type="subunit">
    <text evidence="1 2">Component of the chloroplast small ribosomal subunit (SSU). Mature 70S chloroplast ribosomes of higher plants consist of a small (30S) and a large (50S) subunit. The 30S small subunit contains 1 molecule of ribosomal RNA (16S rRNA) and 24 different proteins. The 50S large subunit contains 3 rRNA molecules (23S, 5S and 4.5S rRNA) and 33 different proteins.</text>
</comment>
<comment type="subcellular location">
    <subcellularLocation>
        <location evidence="1 2">Plastid</location>
        <location evidence="1 2">Chloroplast</location>
    </subcellularLocation>
</comment>
<comment type="mass spectrometry"/>
<comment type="similarity">
    <text evidence="5">Belongs to the universal ribosomal protein uS2 family.</text>
</comment>